<sequence>MAAVRDYKTALEFAKSLPRLDGLSVQELMDSKTRGGLTYNDFLVLPGLVDFPSSEVSLQTKLTRNITLNTPFVSSPMDTVTESEMAIFMALLGGIGFIHHNCTPEDQADMVRRVKNYENGFINNPIVISPTTTVGEAKSMKERFGFSGFPVTEDGKRNGKLMGIVTSRDIQFVEDNSLLVQDVMTKNPVTGAQGITLSEGNEILKKIKKGKLLIVDDNGNLVSMLSRTDLMKNQNYPLASKSATTKQLLCGAAIGTIDADKERLRLLVEAGLDVVILDSSQGNSIFQLNMIKWIKETFPDLEIIAGNVATREQAANLIAAGADGLRIGMGSGSICITQEVMACGRPQGTAVYNVCEFANQFGIPCMADGGVQNIGHITKALALGSSTVMMGGMLAGTTESPGEYFYQDGKRLKAYRGMGSIDAMQKTGTKGNASTSRYFSESDSVLVAQGVSGAVVDKGSIKKFIPYLYNGLQHSCQDIGYKSLTLLKENVQSGKVRFEFRTASAQLEGGVHNLHSYEKRLHN</sequence>
<organism>
    <name type="scientific">Saccharomyces cerevisiae (strain ATCC 204508 / S288c)</name>
    <name type="common">Baker's yeast</name>
    <dbReference type="NCBI Taxonomy" id="559292"/>
    <lineage>
        <taxon>Eukaryota</taxon>
        <taxon>Fungi</taxon>
        <taxon>Dikarya</taxon>
        <taxon>Ascomycota</taxon>
        <taxon>Saccharomycotina</taxon>
        <taxon>Saccharomycetes</taxon>
        <taxon>Saccharomycetales</taxon>
        <taxon>Saccharomycetaceae</taxon>
        <taxon>Saccharomyces</taxon>
    </lineage>
</organism>
<proteinExistence type="evidence at protein level"/>
<protein>
    <recommendedName>
        <fullName evidence="1">Inosine-5'-monophosphate dehydrogenase 3</fullName>
        <shortName evidence="1">IMP dehydrogenase 3</shortName>
        <shortName evidence="1">IMPD 3</shortName>
        <shortName evidence="1">IMPDH 3</shortName>
        <ecNumber evidence="1">1.1.1.205</ecNumber>
    </recommendedName>
</protein>
<reference key="1">
    <citation type="journal article" date="1997" name="Nature">
        <title>The nucleotide sequence of Saccharomyces cerevisiae chromosome XII.</title>
        <authorList>
            <person name="Johnston M."/>
            <person name="Hillier L.W."/>
            <person name="Riles L."/>
            <person name="Albermann K."/>
            <person name="Andre B."/>
            <person name="Ansorge W."/>
            <person name="Benes V."/>
            <person name="Brueckner M."/>
            <person name="Delius H."/>
            <person name="Dubois E."/>
            <person name="Duesterhoeft A."/>
            <person name="Entian K.-D."/>
            <person name="Floeth M."/>
            <person name="Goffeau A."/>
            <person name="Hebling U."/>
            <person name="Heumann K."/>
            <person name="Heuss-Neitzel D."/>
            <person name="Hilbert H."/>
            <person name="Hilger F."/>
            <person name="Kleine K."/>
            <person name="Koetter P."/>
            <person name="Louis E.J."/>
            <person name="Messenguy F."/>
            <person name="Mewes H.-W."/>
            <person name="Miosga T."/>
            <person name="Moestl D."/>
            <person name="Mueller-Auer S."/>
            <person name="Nentwich U."/>
            <person name="Obermaier B."/>
            <person name="Piravandi E."/>
            <person name="Pohl T.M."/>
            <person name="Portetelle D."/>
            <person name="Purnelle B."/>
            <person name="Rechmann S."/>
            <person name="Rieger M."/>
            <person name="Rinke M."/>
            <person name="Rose M."/>
            <person name="Scharfe M."/>
            <person name="Scherens B."/>
            <person name="Scholler P."/>
            <person name="Schwager C."/>
            <person name="Schwarz S."/>
            <person name="Underwood A.P."/>
            <person name="Urrestarazu L.A."/>
            <person name="Vandenbol M."/>
            <person name="Verhasselt P."/>
            <person name="Vierendeels F."/>
            <person name="Voet M."/>
            <person name="Volckaert G."/>
            <person name="Voss H."/>
            <person name="Wambutt R."/>
            <person name="Wedler E."/>
            <person name="Wedler H."/>
            <person name="Zimmermann F.K."/>
            <person name="Zollner A."/>
            <person name="Hani J."/>
            <person name="Hoheisel J.D."/>
        </authorList>
    </citation>
    <scope>NUCLEOTIDE SEQUENCE [LARGE SCALE GENOMIC DNA]</scope>
    <source>
        <strain>ATCC 204508 / S288c</strain>
    </source>
</reference>
<reference key="2">
    <citation type="journal article" date="2014" name="G3 (Bethesda)">
        <title>The reference genome sequence of Saccharomyces cerevisiae: Then and now.</title>
        <authorList>
            <person name="Engel S.R."/>
            <person name="Dietrich F.S."/>
            <person name="Fisk D.G."/>
            <person name="Binkley G."/>
            <person name="Balakrishnan R."/>
            <person name="Costanzo M.C."/>
            <person name="Dwight S.S."/>
            <person name="Hitz B.C."/>
            <person name="Karra K."/>
            <person name="Nash R.S."/>
            <person name="Weng S."/>
            <person name="Wong E.D."/>
            <person name="Lloyd P."/>
            <person name="Skrzypek M.S."/>
            <person name="Miyasato S.R."/>
            <person name="Simison M."/>
            <person name="Cherry J.M."/>
        </authorList>
    </citation>
    <scope>GENOME REANNOTATION</scope>
    <source>
        <strain>ATCC 204508 / S288c</strain>
    </source>
</reference>
<reference key="3">
    <citation type="journal article" date="2003" name="Nature">
        <title>Global analysis of protein localization in budding yeast.</title>
        <authorList>
            <person name="Huh W.-K."/>
            <person name="Falvo J.V."/>
            <person name="Gerke L.C."/>
            <person name="Carroll A.S."/>
            <person name="Howson R.W."/>
            <person name="Weissman J.S."/>
            <person name="O'Shea E.K."/>
        </authorList>
    </citation>
    <scope>SUBCELLULAR LOCATION [LARGE SCALE ANALYSIS]</scope>
</reference>
<reference key="4">
    <citation type="journal article" date="2003" name="Nature">
        <title>Global analysis of protein expression in yeast.</title>
        <authorList>
            <person name="Ghaemmaghami S."/>
            <person name="Huh W.-K."/>
            <person name="Bower K."/>
            <person name="Howson R.W."/>
            <person name="Belle A."/>
            <person name="Dephoure N."/>
            <person name="O'Shea E.K."/>
            <person name="Weissman J.S."/>
        </authorList>
    </citation>
    <scope>LEVEL OF PROTEIN EXPRESSION [LARGE SCALE ANALYSIS]</scope>
</reference>
<reference key="5">
    <citation type="journal article" date="2003" name="J. Biol. Chem.">
        <title>Functional distinctions between IMP dehydrogenase genes in providing mycophenolate resistance and guanine prototrophy to yeast.</title>
        <authorList>
            <person name="Hyle J.W."/>
            <person name="Shaw R.J."/>
            <person name="Reines D."/>
        </authorList>
    </citation>
    <scope>FUNCTION</scope>
</reference>
<reference key="6">
    <citation type="journal article" date="2004" name="Proc. Natl. Acad. Sci. U.S.A.">
        <title>Detection of the mycophenolate-inhibited form of IMP dehydrogenase in vivo.</title>
        <authorList>
            <person name="McPhillips C.C."/>
            <person name="Hyle J.W."/>
            <person name="Reines D."/>
        </authorList>
    </citation>
    <scope>FUNCTION</scope>
    <scope>SUBUNIT</scope>
    <scope>BIOPHYSICOCHEMICAL PROPERTIES</scope>
</reference>
<reference key="7">
    <citation type="journal article" date="2005" name="Yeast">
        <title>Dissection of the molecular basis of mycophenolate resistance in Saccharomyces cerevisiae.</title>
        <authorList>
            <person name="Jenks M.H."/>
            <person name="Reines D."/>
        </authorList>
    </citation>
    <scope>FUNCTION</scope>
    <scope>MUTAGENESIS OF ALA-253</scope>
</reference>
<keyword id="KW-0129">CBS domain</keyword>
<keyword id="KW-0963">Cytoplasm</keyword>
<keyword id="KW-0332">GMP biosynthesis</keyword>
<keyword id="KW-0479">Metal-binding</keyword>
<keyword id="KW-0520">NAD</keyword>
<keyword id="KW-0560">Oxidoreductase</keyword>
<keyword id="KW-0630">Potassium</keyword>
<keyword id="KW-0658">Purine biosynthesis</keyword>
<keyword id="KW-1185">Reference proteome</keyword>
<keyword id="KW-0677">Repeat</keyword>
<dbReference type="EC" id="1.1.1.205" evidence="1"/>
<dbReference type="EMBL" id="U21094">
    <property type="protein sequence ID" value="AAB67516.1"/>
    <property type="molecule type" value="Genomic_DNA"/>
</dbReference>
<dbReference type="EMBL" id="BK006945">
    <property type="protein sequence ID" value="DAA09733.1"/>
    <property type="molecule type" value="Genomic_DNA"/>
</dbReference>
<dbReference type="PIR" id="S59402">
    <property type="entry name" value="S59402"/>
</dbReference>
<dbReference type="RefSeq" id="NP_013536.3">
    <property type="nucleotide sequence ID" value="NM_001182320.3"/>
</dbReference>
<dbReference type="SMR" id="P50095"/>
<dbReference type="BioGRID" id="31691">
    <property type="interactions" value="226"/>
</dbReference>
<dbReference type="DIP" id="DIP-1947N"/>
<dbReference type="FunCoup" id="P50095">
    <property type="interactions" value="1376"/>
</dbReference>
<dbReference type="IntAct" id="P50095">
    <property type="interactions" value="208"/>
</dbReference>
<dbReference type="MINT" id="P50095"/>
<dbReference type="STRING" id="4932.YLR432W"/>
<dbReference type="iPTMnet" id="P50095"/>
<dbReference type="PaxDb" id="4932-YLR432W"/>
<dbReference type="PeptideAtlas" id="P50095"/>
<dbReference type="EnsemblFungi" id="YLR432W_mRNA">
    <property type="protein sequence ID" value="YLR432W"/>
    <property type="gene ID" value="YLR432W"/>
</dbReference>
<dbReference type="GeneID" id="851152"/>
<dbReference type="KEGG" id="sce:YLR432W"/>
<dbReference type="AGR" id="SGD:S000004424"/>
<dbReference type="SGD" id="S000004424">
    <property type="gene designation" value="IMD3"/>
</dbReference>
<dbReference type="VEuPathDB" id="FungiDB:YLR432W"/>
<dbReference type="eggNOG" id="KOG2550">
    <property type="taxonomic scope" value="Eukaryota"/>
</dbReference>
<dbReference type="GeneTree" id="ENSGT00940000170207"/>
<dbReference type="HOGENOM" id="CLU_022552_2_1_1"/>
<dbReference type="InParanoid" id="P50095"/>
<dbReference type="OMA" id="MGYCGAK"/>
<dbReference type="OrthoDB" id="416622at2759"/>
<dbReference type="BioCyc" id="YEAST:YLR432W-MONOMER"/>
<dbReference type="Reactome" id="R-SCE-6798695">
    <property type="pathway name" value="Neutrophil degranulation"/>
</dbReference>
<dbReference type="Reactome" id="R-SCE-73817">
    <property type="pathway name" value="Purine ribonucleoside monophosphate biosynthesis"/>
</dbReference>
<dbReference type="Reactome" id="R-SCE-9748787">
    <property type="pathway name" value="Azathioprine ADME"/>
</dbReference>
<dbReference type="SABIO-RK" id="P50095"/>
<dbReference type="UniPathway" id="UPA00601">
    <property type="reaction ID" value="UER00295"/>
</dbReference>
<dbReference type="BioGRID-ORCS" id="851152">
    <property type="hits" value="0 hits in 10 CRISPR screens"/>
</dbReference>
<dbReference type="PRO" id="PR:P50095"/>
<dbReference type="Proteomes" id="UP000002311">
    <property type="component" value="Chromosome XII"/>
</dbReference>
<dbReference type="RNAct" id="P50095">
    <property type="molecule type" value="protein"/>
</dbReference>
<dbReference type="GO" id="GO:0005737">
    <property type="term" value="C:cytoplasm"/>
    <property type="evidence" value="ECO:0000314"/>
    <property type="project" value="SGD"/>
</dbReference>
<dbReference type="GO" id="GO:0005886">
    <property type="term" value="C:plasma membrane"/>
    <property type="evidence" value="ECO:0007005"/>
    <property type="project" value="SGD"/>
</dbReference>
<dbReference type="GO" id="GO:0042802">
    <property type="term" value="F:identical protein binding"/>
    <property type="evidence" value="ECO:0000353"/>
    <property type="project" value="IntAct"/>
</dbReference>
<dbReference type="GO" id="GO:0003938">
    <property type="term" value="F:IMP dehydrogenase activity"/>
    <property type="evidence" value="ECO:0000318"/>
    <property type="project" value="GO_Central"/>
</dbReference>
<dbReference type="GO" id="GO:0046872">
    <property type="term" value="F:metal ion binding"/>
    <property type="evidence" value="ECO:0007669"/>
    <property type="project" value="UniProtKB-UniRule"/>
</dbReference>
<dbReference type="GO" id="GO:0003729">
    <property type="term" value="F:mRNA binding"/>
    <property type="evidence" value="ECO:0007005"/>
    <property type="project" value="SGD"/>
</dbReference>
<dbReference type="GO" id="GO:0000166">
    <property type="term" value="F:nucleotide binding"/>
    <property type="evidence" value="ECO:0007669"/>
    <property type="project" value="UniProtKB-UniRule"/>
</dbReference>
<dbReference type="GO" id="GO:0006177">
    <property type="term" value="P:GMP biosynthetic process"/>
    <property type="evidence" value="ECO:0007669"/>
    <property type="project" value="UniProtKB-UniRule"/>
</dbReference>
<dbReference type="GO" id="GO:0006183">
    <property type="term" value="P:GTP biosynthetic process"/>
    <property type="evidence" value="ECO:0000318"/>
    <property type="project" value="GO_Central"/>
</dbReference>
<dbReference type="CDD" id="cd04601">
    <property type="entry name" value="CBS_pair_IMPDH"/>
    <property type="match status" value="1"/>
</dbReference>
<dbReference type="CDD" id="cd00381">
    <property type="entry name" value="IMPDH"/>
    <property type="match status" value="1"/>
</dbReference>
<dbReference type="FunFam" id="3.20.20.70:FF:000007">
    <property type="entry name" value="Chromosome 19 SCAF14664, whole genome shotgun sequence"/>
    <property type="match status" value="1"/>
</dbReference>
<dbReference type="Gene3D" id="3.20.20.70">
    <property type="entry name" value="Aldolase class I"/>
    <property type="match status" value="1"/>
</dbReference>
<dbReference type="HAMAP" id="MF_01964">
    <property type="entry name" value="IMPDH"/>
    <property type="match status" value="1"/>
</dbReference>
<dbReference type="InterPro" id="IPR013785">
    <property type="entry name" value="Aldolase_TIM"/>
</dbReference>
<dbReference type="InterPro" id="IPR000644">
    <property type="entry name" value="CBS_dom"/>
</dbReference>
<dbReference type="InterPro" id="IPR046342">
    <property type="entry name" value="CBS_dom_sf"/>
</dbReference>
<dbReference type="InterPro" id="IPR005990">
    <property type="entry name" value="IMP_DH"/>
</dbReference>
<dbReference type="InterPro" id="IPR015875">
    <property type="entry name" value="IMP_DH/GMP_Rdtase_CS"/>
</dbReference>
<dbReference type="InterPro" id="IPR001093">
    <property type="entry name" value="IMP_DH_GMPRt"/>
</dbReference>
<dbReference type="NCBIfam" id="TIGR01302">
    <property type="entry name" value="IMP_dehydrog"/>
    <property type="match status" value="1"/>
</dbReference>
<dbReference type="PANTHER" id="PTHR11911:SF111">
    <property type="entry name" value="INOSINE-5'-MONOPHOSPHATE DEHYDROGENASE"/>
    <property type="match status" value="1"/>
</dbReference>
<dbReference type="PANTHER" id="PTHR11911">
    <property type="entry name" value="INOSINE-5-MONOPHOSPHATE DEHYDROGENASE RELATED"/>
    <property type="match status" value="1"/>
</dbReference>
<dbReference type="Pfam" id="PF00571">
    <property type="entry name" value="CBS"/>
    <property type="match status" value="2"/>
</dbReference>
<dbReference type="Pfam" id="PF00478">
    <property type="entry name" value="IMPDH"/>
    <property type="match status" value="1"/>
</dbReference>
<dbReference type="PIRSF" id="PIRSF000130">
    <property type="entry name" value="IMPDH"/>
    <property type="match status" value="1"/>
</dbReference>
<dbReference type="SMART" id="SM00116">
    <property type="entry name" value="CBS"/>
    <property type="match status" value="2"/>
</dbReference>
<dbReference type="SMART" id="SM01240">
    <property type="entry name" value="IMPDH"/>
    <property type="match status" value="1"/>
</dbReference>
<dbReference type="SUPFAM" id="SSF54631">
    <property type="entry name" value="CBS-domain pair"/>
    <property type="match status" value="1"/>
</dbReference>
<dbReference type="SUPFAM" id="SSF51412">
    <property type="entry name" value="Inosine monophosphate dehydrogenase (IMPDH)"/>
    <property type="match status" value="1"/>
</dbReference>
<dbReference type="PROSITE" id="PS51371">
    <property type="entry name" value="CBS"/>
    <property type="match status" value="2"/>
</dbReference>
<dbReference type="PROSITE" id="PS00487">
    <property type="entry name" value="IMP_DH_GMP_RED"/>
    <property type="match status" value="1"/>
</dbReference>
<comment type="function">
    <text evidence="1 2 5 6">Catalyzes the conversion of inosine 5'-phosphate (IMP) to xanthosine 5'-phosphate (XMP), the first committed and rate-limiting step in the de novo synthesis of guanine nucleotides, and therefore plays an important role in the regulation of cell growth.</text>
</comment>
<comment type="catalytic activity">
    <reaction evidence="1">
        <text>IMP + NAD(+) + H2O = XMP + NADH + H(+)</text>
        <dbReference type="Rhea" id="RHEA:11708"/>
        <dbReference type="ChEBI" id="CHEBI:15377"/>
        <dbReference type="ChEBI" id="CHEBI:15378"/>
        <dbReference type="ChEBI" id="CHEBI:57464"/>
        <dbReference type="ChEBI" id="CHEBI:57540"/>
        <dbReference type="ChEBI" id="CHEBI:57945"/>
        <dbReference type="ChEBI" id="CHEBI:58053"/>
        <dbReference type="EC" id="1.1.1.205"/>
    </reaction>
</comment>
<comment type="cofactor">
    <cofactor evidence="1">
        <name>K(+)</name>
        <dbReference type="ChEBI" id="CHEBI:29103"/>
    </cofactor>
</comment>
<comment type="activity regulation">
    <text evidence="1">Mycophenolic acid (MPA) is a non-competitive inhibitor that prevents formation of the closed enzyme conformation by binding to the same site as the amobile flap. In contrast, mizoribine monophosphate (MZP) is a competitive inhibitor that induces the closed conformation. MPA is a potent inhibitor of mammalian IMPDHs but a poor inhibitor of the bacterial enzymes. MZP is a more potent inhibitor of bacterial IMPDH.</text>
</comment>
<comment type="biophysicochemical properties">
    <kinetics>
        <KM evidence="5">100 uM for Inosine 5'-phosphate</KM>
        <KM evidence="5">314 uM for NAD(+)</KM>
    </kinetics>
</comment>
<comment type="pathway">
    <text evidence="1">Purine metabolism; XMP biosynthesis via de novo pathway; XMP from IMP: step 1/1.</text>
</comment>
<comment type="subunit">
    <text evidence="1 5">Homotetramer. Seems to be able to form heterotetramers composed from more than 1 of the 3 IMPDH gene products (IMD2-4).</text>
</comment>
<comment type="interaction">
    <interactant intactId="EBI-9190">
        <id>P50095</id>
    </interactant>
    <interactant intactId="EBI-9190">
        <id>P50095</id>
        <label>IMD3</label>
    </interactant>
    <organismsDiffer>false</organismsDiffer>
    <experiments>3</experiments>
</comment>
<comment type="interaction">
    <interactant intactId="EBI-9190">
        <id>P50095</id>
    </interactant>
    <interactant intactId="EBI-9195">
        <id>P50094</id>
        <label>IMD4</label>
    </interactant>
    <organismsDiffer>false</organismsDiffer>
    <experiments>9</experiments>
</comment>
<comment type="subcellular location">
    <subcellularLocation>
        <location evidence="1 3">Cytoplasm</location>
    </subcellularLocation>
</comment>
<comment type="miscellaneous">
    <text evidence="4">Present with 26300 molecules/cell in log phase SD medium.</text>
</comment>
<comment type="similarity">
    <text evidence="1">Belongs to the IMPDH/GMPR family.</text>
</comment>
<gene>
    <name evidence="1" type="primary">IMD3</name>
    <name type="ordered locus">YLR432W</name>
    <name type="ORF">L9753.4</name>
</gene>
<name>IMDH3_YEAST</name>
<feature type="chain" id="PRO_0000093683" description="Inosine-5'-monophosphate dehydrogenase 3">
    <location>
        <begin position="1"/>
        <end position="523"/>
    </location>
</feature>
<feature type="domain" description="CBS 1" evidence="1">
    <location>
        <begin position="121"/>
        <end position="183"/>
    </location>
</feature>
<feature type="domain" description="CBS 2" evidence="1">
    <location>
        <begin position="184"/>
        <end position="240"/>
    </location>
</feature>
<feature type="active site" description="Thioimidate intermediate" evidence="1">
    <location>
        <position position="335"/>
    </location>
</feature>
<feature type="active site" description="Proton acceptor" evidence="1">
    <location>
        <position position="437"/>
    </location>
</feature>
<feature type="binding site" evidence="1">
    <location>
        <begin position="278"/>
        <end position="280"/>
    </location>
    <ligand>
        <name>NAD(+)</name>
        <dbReference type="ChEBI" id="CHEBI:57540"/>
    </ligand>
</feature>
<feature type="binding site" evidence="1">
    <location>
        <begin position="328"/>
        <end position="330"/>
    </location>
    <ligand>
        <name>NAD(+)</name>
        <dbReference type="ChEBI" id="CHEBI:57540"/>
    </ligand>
</feature>
<feature type="binding site" description="in other chain" evidence="1">
    <location>
        <position position="330"/>
    </location>
    <ligand>
        <name>K(+)</name>
        <dbReference type="ChEBI" id="CHEBI:29103"/>
        <note>ligand shared between two tetrameric partners</note>
    </ligand>
</feature>
<feature type="binding site" description="in other chain" evidence="1">
    <location>
        <position position="332"/>
    </location>
    <ligand>
        <name>K(+)</name>
        <dbReference type="ChEBI" id="CHEBI:29103"/>
        <note>ligand shared between two tetrameric partners</note>
    </ligand>
</feature>
<feature type="binding site" evidence="1">
    <location>
        <position position="333"/>
    </location>
    <ligand>
        <name>IMP</name>
        <dbReference type="ChEBI" id="CHEBI:58053"/>
    </ligand>
</feature>
<feature type="binding site" description="in other chain" evidence="1">
    <location>
        <position position="335"/>
    </location>
    <ligand>
        <name>K(+)</name>
        <dbReference type="ChEBI" id="CHEBI:29103"/>
        <note>ligand shared between two tetrameric partners</note>
    </ligand>
</feature>
<feature type="binding site" evidence="1">
    <location>
        <begin position="368"/>
        <end position="370"/>
    </location>
    <ligand>
        <name>IMP</name>
        <dbReference type="ChEBI" id="CHEBI:58053"/>
    </ligand>
</feature>
<feature type="binding site" evidence="1">
    <location>
        <begin position="391"/>
        <end position="392"/>
    </location>
    <ligand>
        <name>IMP</name>
        <dbReference type="ChEBI" id="CHEBI:58053"/>
    </ligand>
</feature>
<feature type="binding site" evidence="1">
    <location>
        <begin position="415"/>
        <end position="419"/>
    </location>
    <ligand>
        <name>IMP</name>
        <dbReference type="ChEBI" id="CHEBI:58053"/>
    </ligand>
</feature>
<feature type="binding site" evidence="1">
    <location>
        <position position="449"/>
    </location>
    <ligand>
        <name>IMP</name>
        <dbReference type="ChEBI" id="CHEBI:58053"/>
    </ligand>
</feature>
<feature type="binding site" evidence="1">
    <location>
        <position position="508"/>
    </location>
    <ligand>
        <name>K(+)</name>
        <dbReference type="ChEBI" id="CHEBI:29103"/>
        <note>ligand shared between two tetrameric partners</note>
    </ligand>
</feature>
<feature type="binding site" evidence="1">
    <location>
        <position position="509"/>
    </location>
    <ligand>
        <name>K(+)</name>
        <dbReference type="ChEBI" id="CHEBI:29103"/>
        <note>ligand shared between two tetrameric partners</note>
    </ligand>
</feature>
<feature type="binding site" evidence="1">
    <location>
        <position position="510"/>
    </location>
    <ligand>
        <name>K(+)</name>
        <dbReference type="ChEBI" id="CHEBI:29103"/>
        <note>ligand shared between two tetrameric partners</note>
    </ligand>
</feature>
<feature type="mutagenesis site" description="Increases drug-resistance to MPA." evidence="6">
    <original>A</original>
    <variation>S</variation>
    <location>
        <position position="253"/>
    </location>
</feature>
<accession>P50095</accession>
<accession>D6VZ67</accession>
<evidence type="ECO:0000255" key="1">
    <source>
        <dbReference type="HAMAP-Rule" id="MF_03156"/>
    </source>
</evidence>
<evidence type="ECO:0000269" key="2">
    <source>
    </source>
</evidence>
<evidence type="ECO:0000269" key="3">
    <source>
    </source>
</evidence>
<evidence type="ECO:0000269" key="4">
    <source>
    </source>
</evidence>
<evidence type="ECO:0000269" key="5">
    <source>
    </source>
</evidence>
<evidence type="ECO:0000269" key="6">
    <source>
    </source>
</evidence>